<accession>P05187</accession>
<accession>P05188</accession>
<accession>P06861</accession>
<accession>Q53S78</accession>
<accession>Q96DB7</accession>
<proteinExistence type="evidence at protein level"/>
<evidence type="ECO:0000250" key="1">
    <source>
        <dbReference type="UniProtKB" id="P05186"/>
    </source>
</evidence>
<evidence type="ECO:0000255" key="2">
    <source>
        <dbReference type="PROSITE-ProRule" id="PRU10042"/>
    </source>
</evidence>
<evidence type="ECO:0000256" key="3">
    <source>
        <dbReference type="SAM" id="MobiDB-lite"/>
    </source>
</evidence>
<evidence type="ECO:0000269" key="4">
    <source>
    </source>
</evidence>
<evidence type="ECO:0000269" key="5">
    <source>
    </source>
</evidence>
<evidence type="ECO:0000269" key="6">
    <source>
    </source>
</evidence>
<evidence type="ECO:0000269" key="7">
    <source>
    </source>
</evidence>
<evidence type="ECO:0000269" key="8">
    <source>
    </source>
</evidence>
<evidence type="ECO:0000269" key="9">
    <source>
    </source>
</evidence>
<evidence type="ECO:0000269" key="10">
    <source>
    </source>
</evidence>
<evidence type="ECO:0000269" key="11">
    <source>
    </source>
</evidence>
<evidence type="ECO:0000269" key="12">
    <source>
    </source>
</evidence>
<evidence type="ECO:0000269" key="13">
    <source>
    </source>
</evidence>
<evidence type="ECO:0000269" key="14">
    <source>
    </source>
</evidence>
<evidence type="ECO:0000269" key="15">
    <source>
    </source>
</evidence>
<evidence type="ECO:0000269" key="16">
    <source>
    </source>
</evidence>
<evidence type="ECO:0000269" key="17">
    <source>
    </source>
</evidence>
<evidence type="ECO:0000303" key="18">
    <source>
    </source>
</evidence>
<evidence type="ECO:0000305" key="19"/>
<evidence type="ECO:0000305" key="20">
    <source>
    </source>
</evidence>
<evidence type="ECO:0000312" key="21">
    <source>
        <dbReference type="HGNC" id="HGNC:439"/>
    </source>
</evidence>
<evidence type="ECO:0007829" key="22">
    <source>
        <dbReference type="PDB" id="1ZED"/>
    </source>
</evidence>
<feature type="signal peptide" evidence="17">
    <location>
        <begin position="1"/>
        <end position="22"/>
    </location>
</feature>
<feature type="chain" id="PRO_0000024031" description="Alkaline phosphatase, placental type">
    <location>
        <begin position="23"/>
        <end position="506"/>
    </location>
</feature>
<feature type="propeptide" id="PRO_0000024032" description="Removed in mature form">
    <location>
        <begin position="507"/>
        <end position="535"/>
    </location>
</feature>
<feature type="transmembrane region" description="Helical">
    <location>
        <begin position="513"/>
        <end position="529"/>
    </location>
</feature>
<feature type="region of interest" description="Disordered" evidence="3">
    <location>
        <begin position="425"/>
        <end position="449"/>
    </location>
</feature>
<feature type="compositionally biased region" description="Polar residues" evidence="3">
    <location>
        <begin position="434"/>
        <end position="446"/>
    </location>
</feature>
<feature type="active site" description="Phosphoserine intermediate" evidence="2">
    <location>
        <position position="114"/>
    </location>
</feature>
<feature type="binding site" evidence="4 7 8 11">
    <location>
        <position position="64"/>
    </location>
    <ligand>
        <name>Mg(2+)</name>
        <dbReference type="ChEBI" id="CHEBI:18420"/>
    </ligand>
</feature>
<feature type="binding site" evidence="4 7 8 11">
    <location>
        <position position="64"/>
    </location>
    <ligand>
        <name>Zn(2+)</name>
        <dbReference type="ChEBI" id="CHEBI:29105"/>
        <label>1</label>
    </ligand>
</feature>
<feature type="binding site" evidence="4 7 8 11">
    <location>
        <position position="114"/>
    </location>
    <ligand>
        <name>Zn(2+)</name>
        <dbReference type="ChEBI" id="CHEBI:29105"/>
        <label>1</label>
    </ligand>
</feature>
<feature type="binding site" evidence="4 7 8 11">
    <location>
        <position position="177"/>
    </location>
    <ligand>
        <name>Mg(2+)</name>
        <dbReference type="ChEBI" id="CHEBI:18420"/>
    </ligand>
</feature>
<feature type="binding site" evidence="1">
    <location>
        <position position="238"/>
    </location>
    <ligand>
        <name>Ca(2+)</name>
        <dbReference type="ChEBI" id="CHEBI:29108"/>
    </ligand>
</feature>
<feature type="binding site" evidence="1">
    <location>
        <position position="291"/>
    </location>
    <ligand>
        <name>Ca(2+)</name>
        <dbReference type="ChEBI" id="CHEBI:29108"/>
    </ligand>
</feature>
<feature type="binding site" evidence="1">
    <location>
        <position position="292"/>
    </location>
    <ligand>
        <name>Ca(2+)</name>
        <dbReference type="ChEBI" id="CHEBI:29108"/>
    </ligand>
</feature>
<feature type="binding site" evidence="1">
    <location>
        <position position="307"/>
    </location>
    <ligand>
        <name>Ca(2+)</name>
        <dbReference type="ChEBI" id="CHEBI:29108"/>
    </ligand>
</feature>
<feature type="binding site" evidence="4 7 8 11">
    <location>
        <position position="333"/>
    </location>
    <ligand>
        <name>Mg(2+)</name>
        <dbReference type="ChEBI" id="CHEBI:18420"/>
    </ligand>
</feature>
<feature type="binding site" evidence="4 7 8 11">
    <location>
        <position position="338"/>
    </location>
    <ligand>
        <name>Zn(2+)</name>
        <dbReference type="ChEBI" id="CHEBI:29105"/>
        <label>2</label>
    </ligand>
</feature>
<feature type="binding site" evidence="4 7 8 11">
    <location>
        <position position="342"/>
    </location>
    <ligand>
        <name>Zn(2+)</name>
        <dbReference type="ChEBI" id="CHEBI:29105"/>
        <label>2</label>
    </ligand>
</feature>
<feature type="binding site" evidence="4 7 8 11">
    <location>
        <position position="379"/>
    </location>
    <ligand>
        <name>Zn(2+)</name>
        <dbReference type="ChEBI" id="CHEBI:29105"/>
        <label>1</label>
    </ligand>
</feature>
<feature type="binding site" evidence="4 7 8 11">
    <location>
        <position position="380"/>
    </location>
    <ligand>
        <name>Zn(2+)</name>
        <dbReference type="ChEBI" id="CHEBI:29105"/>
        <label>1</label>
    </ligand>
</feature>
<feature type="binding site" evidence="4 7 8 11">
    <location>
        <position position="454"/>
    </location>
    <ligand>
        <name>Zn(2+)</name>
        <dbReference type="ChEBI" id="CHEBI:29105"/>
        <label>2</label>
    </ligand>
</feature>
<feature type="lipid moiety-binding region" description="GPI-anchor amidated aspartate" evidence="12">
    <location>
        <position position="506"/>
    </location>
</feature>
<feature type="glycosylation site" description="N-linked (GlcNAc...) asparagine" evidence="7 8 11">
    <location>
        <position position="144"/>
    </location>
</feature>
<feature type="glycosylation site" description="N-linked (GlcNAc...) asparagine" evidence="7 8 11">
    <location>
        <position position="271"/>
    </location>
</feature>
<feature type="disulfide bond" evidence="4 5 7 8 11">
    <location>
        <begin position="143"/>
        <end position="205"/>
    </location>
</feature>
<feature type="disulfide bond" evidence="4 5 7 8 11">
    <location>
        <begin position="489"/>
        <end position="496"/>
    </location>
</feature>
<feature type="sequence variant" id="VAR_017419" description="In dbSNP:rs1130335." evidence="14 15">
    <original>P</original>
    <variation>L</variation>
    <location>
        <position position="25"/>
    </location>
</feature>
<feature type="sequence variant" id="VAR_050520" description="In dbSNP:rs13026692." evidence="6">
    <original>I</original>
    <variation>L</variation>
    <location>
        <position position="89"/>
    </location>
</feature>
<feature type="sequence variant" id="VAR_050521" description="In dbSNP:rs1048988." evidence="16">
    <original>R</original>
    <variation>P</variation>
    <location>
        <position position="231"/>
    </location>
</feature>
<feature type="sequence variant" id="VAR_050522" description="In dbSNP:rs2853378." evidence="15">
    <original>R</original>
    <variation>H</variation>
    <location>
        <position position="263"/>
    </location>
</feature>
<feature type="sequence variant" id="VAR_050523" description="In dbSNP:rs1048994.">
    <original>E</original>
    <variation>G</variation>
    <location>
        <position position="451"/>
    </location>
</feature>
<feature type="sequence conflict" description="In Ref. 3; AAA51709." evidence="19" ref="3">
    <original>M</original>
    <variation>V</variation>
    <location>
        <position position="66"/>
    </location>
</feature>
<feature type="sequence conflict" description="In Ref. 6; AAA51706." evidence="19" ref="6">
    <original>AK</original>
    <variation>GE</variation>
    <location>
        <begin position="261"/>
        <end position="262"/>
    </location>
</feature>
<feature type="sequence conflict" description="In Ref. 3; AAA51709." evidence="19" ref="3">
    <original>Q</original>
    <variation>R</variation>
    <location>
        <position position="277"/>
    </location>
</feature>
<feature type="sequence conflict" description="In Ref. 3; AAA51709." evidence="19" ref="3">
    <original>T</original>
    <variation>A</variation>
    <location>
        <position position="285"/>
    </location>
</feature>
<feature type="sequence conflict" description="In Ref. 6; AAA51706." evidence="19" ref="6">
    <original>N</original>
    <variation>H</variation>
    <location>
        <position position="324"/>
    </location>
</feature>
<feature type="sequence conflict" description="In Ref. 3; AAA51709." evidence="19" ref="3">
    <original>Y</original>
    <variation>C</variation>
    <location>
        <position position="389"/>
    </location>
</feature>
<feature type="sequence conflict" description="In Ref. 3; AAA51709." evidence="19" ref="3">
    <original>S</original>
    <variation>G</variation>
    <location>
        <position position="394"/>
    </location>
</feature>
<feature type="sequence conflict" description="In Ref. 6; AAA51706." evidence="19" ref="6">
    <original>IF</original>
    <variation>FI</variation>
    <location>
        <begin position="396"/>
        <end position="397"/>
    </location>
</feature>
<feature type="sequence conflict" description="In Ref. 6; AAA51706." evidence="19" ref="6">
    <original>P</original>
    <variation>A</variation>
    <location>
        <position position="401"/>
    </location>
</feature>
<feature type="helix" evidence="22">
    <location>
        <begin position="26"/>
        <end position="29"/>
    </location>
</feature>
<feature type="helix" evidence="22">
    <location>
        <begin position="31"/>
        <end position="47"/>
    </location>
</feature>
<feature type="strand" evidence="22">
    <location>
        <begin position="56"/>
        <end position="63"/>
    </location>
</feature>
<feature type="helix" evidence="22">
    <location>
        <begin position="68"/>
        <end position="81"/>
    </location>
</feature>
<feature type="helix" evidence="22">
    <location>
        <begin position="93"/>
        <end position="95"/>
    </location>
</feature>
<feature type="strand" evidence="22">
    <location>
        <begin position="97"/>
        <end position="103"/>
    </location>
</feature>
<feature type="helix" evidence="22">
    <location>
        <begin position="114"/>
        <end position="123"/>
    </location>
</feature>
<feature type="strand" evidence="22">
    <location>
        <begin position="132"/>
        <end position="134"/>
    </location>
</feature>
<feature type="helix" evidence="22">
    <location>
        <begin position="143"/>
        <end position="145"/>
    </location>
</feature>
<feature type="helix" evidence="22">
    <location>
        <begin position="154"/>
        <end position="160"/>
    </location>
</feature>
<feature type="strand" evidence="22">
    <location>
        <begin position="164"/>
        <end position="172"/>
    </location>
</feature>
<feature type="helix" evidence="22">
    <location>
        <begin position="176"/>
        <end position="179"/>
    </location>
</feature>
<feature type="turn" evidence="22">
    <location>
        <begin position="180"/>
        <end position="182"/>
    </location>
</feature>
<feature type="helix" evidence="22">
    <location>
        <begin position="193"/>
        <end position="195"/>
    </location>
</feature>
<feature type="helix" evidence="22">
    <location>
        <begin position="198"/>
        <end position="202"/>
    </location>
</feature>
<feature type="helix" evidence="22">
    <location>
        <begin position="208"/>
        <end position="214"/>
    </location>
</feature>
<feature type="strand" evidence="22">
    <location>
        <begin position="219"/>
        <end position="224"/>
    </location>
</feature>
<feature type="helix" evidence="22">
    <location>
        <begin position="226"/>
        <end position="229"/>
    </location>
</feature>
<feature type="helix" evidence="22">
    <location>
        <begin position="243"/>
        <end position="245"/>
    </location>
</feature>
<feature type="strand" evidence="22">
    <location>
        <begin position="249"/>
        <end position="251"/>
    </location>
</feature>
<feature type="helix" evidence="22">
    <location>
        <begin position="255"/>
        <end position="261"/>
    </location>
</feature>
<feature type="strand" evidence="22">
    <location>
        <begin position="266"/>
        <end position="269"/>
    </location>
</feature>
<feature type="helix" evidence="22">
    <location>
        <begin position="272"/>
        <end position="279"/>
    </location>
</feature>
<feature type="strand" evidence="22">
    <location>
        <begin position="285"/>
        <end position="290"/>
    </location>
</feature>
<feature type="strand" evidence="22">
    <location>
        <begin position="292"/>
        <end position="295"/>
    </location>
</feature>
<feature type="helix" evidence="22">
    <location>
        <begin position="299"/>
        <end position="301"/>
    </location>
</feature>
<feature type="turn" evidence="22">
    <location>
        <begin position="304"/>
        <end position="306"/>
    </location>
</feature>
<feature type="helix" evidence="22">
    <location>
        <begin position="310"/>
        <end position="321"/>
    </location>
</feature>
<feature type="strand" evidence="22">
    <location>
        <begin position="328"/>
        <end position="334"/>
    </location>
</feature>
<feature type="helix" evidence="22">
    <location>
        <begin position="337"/>
        <end position="342"/>
    </location>
</feature>
<feature type="helix" evidence="22">
    <location>
        <begin position="346"/>
        <end position="366"/>
    </location>
</feature>
<feature type="turn" evidence="22">
    <location>
        <begin position="369"/>
        <end position="371"/>
    </location>
</feature>
<feature type="strand" evidence="22">
    <location>
        <begin position="372"/>
        <end position="379"/>
    </location>
</feature>
<feature type="strand" evidence="22">
    <location>
        <begin position="381"/>
        <end position="386"/>
    </location>
</feature>
<feature type="strand" evidence="22">
    <location>
        <begin position="411"/>
        <end position="418"/>
    </location>
</feature>
<feature type="helix" evidence="22">
    <location>
        <begin position="433"/>
        <end position="436"/>
    </location>
</feature>
<feature type="strand" evidence="22">
    <location>
        <begin position="445"/>
        <end position="447"/>
    </location>
</feature>
<feature type="strand" evidence="22">
    <location>
        <begin position="459"/>
        <end position="465"/>
    </location>
</feature>
<feature type="helix" evidence="22">
    <location>
        <begin position="468"/>
        <end position="470"/>
    </location>
</feature>
<feature type="strand" evidence="22">
    <location>
        <begin position="473"/>
        <end position="476"/>
    </location>
</feature>
<feature type="helix" evidence="22">
    <location>
        <begin position="479"/>
        <end position="487"/>
    </location>
</feature>
<feature type="helix" evidence="22">
    <location>
        <begin position="491"/>
        <end position="493"/>
    </location>
</feature>
<sequence>MLGPCMLLLLLLLGLRLQLSLGIIPVEEENPDFWNREAAEALGAAKKLQPAQTAAKNLIIFLGDGMGVSTVTAARILKGQKKDKLGPEIPLAMDRFPYVALSKTYNVDKHVPDSGATATAYLCGVKGNFQTIGLSAAARFNQCNTTRGNEVISVMNRAKKAGKSVGVVTTTRVQHASPAGTYAHTVNRNWYSDADVPASARQEGCQDIATQLISNMDIDVILGGGRKYMFRMGTPDPEYPDDYSQGGTRLDGKNLVQEWLAKRQGARYVWNRTELMQASLDPSVTHLMGLFEPGDMKYEIHRDSTLDPSLMEMTEAALRLLSRNPRGFFLFVEGGRIDHGHHESRAYRALTETIMFDDAIERAGQLTSEEDTLSLVTADHSHVFSFGGYPLRGSSIFGLAPGKARDRKAYTVLLYGNGPGYVLKDGARPDVTESESGSPEYRQQSAVPLDEETHAGEDVAVFARGPQAHLVHGVQEQTFIAHVMAFAACLEPYTACDLAPPAGTTDAAHPGRSVVPALLPLLAGTLLLLETATAP</sequence>
<organism>
    <name type="scientific">Homo sapiens</name>
    <name type="common">Human</name>
    <dbReference type="NCBI Taxonomy" id="9606"/>
    <lineage>
        <taxon>Eukaryota</taxon>
        <taxon>Metazoa</taxon>
        <taxon>Chordata</taxon>
        <taxon>Craniata</taxon>
        <taxon>Vertebrata</taxon>
        <taxon>Euteleostomi</taxon>
        <taxon>Mammalia</taxon>
        <taxon>Eutheria</taxon>
        <taxon>Euarchontoglires</taxon>
        <taxon>Primates</taxon>
        <taxon>Haplorrhini</taxon>
        <taxon>Catarrhini</taxon>
        <taxon>Hominidae</taxon>
        <taxon>Homo</taxon>
    </lineage>
</organism>
<protein>
    <recommendedName>
        <fullName>Alkaline phosphatase, placental type</fullName>
        <ecNumber>3.1.3.1</ecNumber>
    </recommendedName>
    <alternativeName>
        <fullName>Alkaline phosphatase Regan isozyme</fullName>
    </alternativeName>
    <alternativeName>
        <fullName evidence="18">Placental alkaline phosphatase 1</fullName>
        <shortName>PLAP-1</shortName>
    </alternativeName>
</protein>
<reference key="1">
    <citation type="journal article" date="1988" name="J. Biol. Chem.">
        <title>Nucleotide sequence of the human placental alkaline phosphatase gene. Evolution of the 5' flanking region by deletion/substitution.</title>
        <authorList>
            <person name="Knoll B.J."/>
            <person name="Rothblum K.N."/>
            <person name="Longley M.A."/>
        </authorList>
    </citation>
    <scope>NUCLEOTIDE SEQUENCE [GENOMIC DNA]</scope>
</reference>
<reference key="2">
    <citation type="journal article" date="1986" name="J. Biol. Chem.">
        <title>Molecular cloning and sequence analysis of human placental alkaline phosphatase.</title>
        <authorList>
            <person name="Millan J.L."/>
        </authorList>
    </citation>
    <scope>NUCLEOTIDE SEQUENCE [MRNA]</scope>
    <scope>VARIANT PRO-231</scope>
</reference>
<reference key="3">
    <citation type="journal article" date="1986" name="Proc. Natl. Acad. Sci. U.S.A.">
        <title>Products of two common alleles at the locus for human placental alkaline phosphatase differ by seven amino acids.</title>
        <authorList>
            <person name="Henthorn P.S."/>
            <person name="Knoll B.J."/>
            <person name="Raducha M."/>
            <person name="Rothblum K.N."/>
            <person name="Slaughter C."/>
            <person name="Weiss M."/>
            <person name="Lafferty M.A."/>
            <person name="Fischer T."/>
            <person name="Harris H."/>
        </authorList>
    </citation>
    <scope>NUCLEOTIDE SEQUENCE [MRNA]</scope>
    <scope>PARTIAL PROTEIN SEQUENCE</scope>
    <scope>VARIANTS LEU-25 AND HIS-263</scope>
    <scope>POLYMORPHISM</scope>
</reference>
<reference key="4">
    <citation type="journal article" date="2005" name="Nature">
        <title>Generation and annotation of the DNA sequences of human chromosomes 2 and 4.</title>
        <authorList>
            <person name="Hillier L.W."/>
            <person name="Graves T.A."/>
            <person name="Fulton R.S."/>
            <person name="Fulton L.A."/>
            <person name="Pepin K.H."/>
            <person name="Minx P."/>
            <person name="Wagner-McPherson C."/>
            <person name="Layman D."/>
            <person name="Wylie K."/>
            <person name="Sekhon M."/>
            <person name="Becker M.C."/>
            <person name="Fewell G.A."/>
            <person name="Delehaunty K.D."/>
            <person name="Miner T.L."/>
            <person name="Nash W.E."/>
            <person name="Kremitzki C."/>
            <person name="Oddy L."/>
            <person name="Du H."/>
            <person name="Sun H."/>
            <person name="Bradshaw-Cordum H."/>
            <person name="Ali J."/>
            <person name="Carter J."/>
            <person name="Cordes M."/>
            <person name="Harris A."/>
            <person name="Isak A."/>
            <person name="van Brunt A."/>
            <person name="Nguyen C."/>
            <person name="Du F."/>
            <person name="Courtney L."/>
            <person name="Kalicki J."/>
            <person name="Ozersky P."/>
            <person name="Abbott S."/>
            <person name="Armstrong J."/>
            <person name="Belter E.A."/>
            <person name="Caruso L."/>
            <person name="Cedroni M."/>
            <person name="Cotton M."/>
            <person name="Davidson T."/>
            <person name="Desai A."/>
            <person name="Elliott G."/>
            <person name="Erb T."/>
            <person name="Fronick C."/>
            <person name="Gaige T."/>
            <person name="Haakenson W."/>
            <person name="Haglund K."/>
            <person name="Holmes A."/>
            <person name="Harkins R."/>
            <person name="Kim K."/>
            <person name="Kruchowski S.S."/>
            <person name="Strong C.M."/>
            <person name="Grewal N."/>
            <person name="Goyea E."/>
            <person name="Hou S."/>
            <person name="Levy A."/>
            <person name="Martinka S."/>
            <person name="Mead K."/>
            <person name="McLellan M.D."/>
            <person name="Meyer R."/>
            <person name="Randall-Maher J."/>
            <person name="Tomlinson C."/>
            <person name="Dauphin-Kohlberg S."/>
            <person name="Kozlowicz-Reilly A."/>
            <person name="Shah N."/>
            <person name="Swearengen-Shahid S."/>
            <person name="Snider J."/>
            <person name="Strong J.T."/>
            <person name="Thompson J."/>
            <person name="Yoakum M."/>
            <person name="Leonard S."/>
            <person name="Pearman C."/>
            <person name="Trani L."/>
            <person name="Radionenko M."/>
            <person name="Waligorski J.E."/>
            <person name="Wang C."/>
            <person name="Rock S.M."/>
            <person name="Tin-Wollam A.-M."/>
            <person name="Maupin R."/>
            <person name="Latreille P."/>
            <person name="Wendl M.C."/>
            <person name="Yang S.-P."/>
            <person name="Pohl C."/>
            <person name="Wallis J.W."/>
            <person name="Spieth J."/>
            <person name="Bieri T.A."/>
            <person name="Berkowicz N."/>
            <person name="Nelson J.O."/>
            <person name="Osborne J."/>
            <person name="Ding L."/>
            <person name="Meyer R."/>
            <person name="Sabo A."/>
            <person name="Shotland Y."/>
            <person name="Sinha P."/>
            <person name="Wohldmann P.E."/>
            <person name="Cook L.L."/>
            <person name="Hickenbotham M.T."/>
            <person name="Eldred J."/>
            <person name="Williams D."/>
            <person name="Jones T.A."/>
            <person name="She X."/>
            <person name="Ciccarelli F.D."/>
            <person name="Izaurralde E."/>
            <person name="Taylor J."/>
            <person name="Schmutz J."/>
            <person name="Myers R.M."/>
            <person name="Cox D.R."/>
            <person name="Huang X."/>
            <person name="McPherson J.D."/>
            <person name="Mardis E.R."/>
            <person name="Clifton S.W."/>
            <person name="Warren W.C."/>
            <person name="Chinwalla A.T."/>
            <person name="Eddy S.R."/>
            <person name="Marra M.A."/>
            <person name="Ovcharenko I."/>
            <person name="Furey T.S."/>
            <person name="Miller W."/>
            <person name="Eichler E.E."/>
            <person name="Bork P."/>
            <person name="Suyama M."/>
            <person name="Torrents D."/>
            <person name="Waterston R.H."/>
            <person name="Wilson R.K."/>
        </authorList>
    </citation>
    <scope>NUCLEOTIDE SEQUENCE [LARGE SCALE GENOMIC DNA]</scope>
</reference>
<reference key="5">
    <citation type="journal article" date="2004" name="Genome Res.">
        <title>The status, quality, and expansion of the NIH full-length cDNA project: the Mammalian Gene Collection (MGC).</title>
        <authorList>
            <consortium name="The MGC Project Team"/>
        </authorList>
    </citation>
    <scope>NUCLEOTIDE SEQUENCE [LARGE SCALE MRNA]</scope>
    <scope>VARIANT LEU-89</scope>
    <source>
        <tissue>Cervix</tissue>
        <tissue>Placenta</tissue>
    </source>
</reference>
<reference key="6">
    <citation type="journal article" date="1985" name="Proc. Natl. Acad. Sci. U.S.A.">
        <title>Cloning, sequencing, and chromosomal localization of human term placental alkaline phosphatase cDNA.</title>
        <authorList>
            <person name="Kam W."/>
            <person name="Clauser E."/>
            <person name="Kim Y.S."/>
            <person name="Kan Y.W."/>
            <person name="Rutter W.J."/>
        </authorList>
    </citation>
    <scope>NUCLEOTIDE SEQUENCE [MRNA] OF 6-535</scope>
    <scope>VARIANT LEU-25</scope>
</reference>
<reference key="7">
    <citation type="journal article" date="1983" name="Biochem. Biophys. Res. Commun.">
        <title>Purification and partial sequencing of human placental alkaline phosphatase.</title>
        <authorList>
            <person name="Ezra E."/>
            <person name="Blacher R."/>
            <person name="Udenfriend S."/>
        </authorList>
    </citation>
    <scope>PROTEIN SEQUENCE OF 23-64</scope>
</reference>
<reference key="8">
    <citation type="journal article" date="1986" name="Proc. Natl. Acad. Sci. U.S.A.">
        <title>Expression of different-sized placental alkaline phosphatase mRNAs in placenta and choriocarcinoma cells.</title>
        <authorList>
            <person name="Ovitt C.E."/>
            <person name="Strauss A.W."/>
            <person name="Alpers D.H."/>
            <person name="Chou J.Y."/>
            <person name="Boime I."/>
        </authorList>
    </citation>
    <scope>NUCLEOTIDE SEQUENCE OF 382-535</scope>
</reference>
<reference key="9">
    <citation type="journal article" date="1988" name="Proc. Natl. Acad. Sci. U.S.A.">
        <title>Aspartic acid-484 of nascent placental alkaline phosphatase condenses with a phosphatidylinositol glycan to become the carboxyl terminus of the mature enzyme.</title>
        <authorList>
            <person name="Micanovic R."/>
            <person name="Bailey C.A."/>
            <person name="Brink L."/>
            <person name="Gerber L."/>
            <person name="Pan Y.C.E."/>
            <person name="Hulmes J.D."/>
            <person name="Udenfriend S."/>
        </authorList>
    </citation>
    <scope>PROTEIN SEQUENCE OF 485-535</scope>
</reference>
<reference key="10">
    <citation type="journal article" date="1990" name="Proc. Natl. Acad. Sci. U.S.A.">
        <title>Selectivity of the cleavage/attachment site of phosphatidylinositol-glycan-anchored membrane proteins determined by site-specific mutagenesis at Asp-484 of placental alkaline phosphatase.</title>
        <authorList>
            <person name="Micanovic R."/>
            <person name="Gerber L.D."/>
            <person name="Berger J."/>
            <person name="Kodukula K."/>
            <person name="Udenfriend S."/>
        </authorList>
    </citation>
    <scope>GPI-ANCHOR AT ASP-506</scope>
</reference>
<reference key="11">
    <citation type="journal article" date="1991" name="J. Biol. Chem.">
        <title>Mutation of a single amino acid converts germ cell alkaline phosphatase to placental alkaline phosphatase.</title>
        <authorList>
            <person name="Watanabe T."/>
            <person name="Wada N."/>
            <person name="Kim E.E."/>
            <person name="Wyckoff H.W."/>
            <person name="Chou J.Y."/>
        </authorList>
    </citation>
    <scope>FUNCTION</scope>
    <scope>CATALYTIC ACTIVITY</scope>
</reference>
<reference key="12">
    <citation type="journal article" date="1992" name="J. Cell Biol.">
        <title>Site-specific mutations in the COOH-terminus of placental alkaline phosphatase: a single amino acid change converts a phosphatidylinositol-glycan-anchored protein to a secreted protein.</title>
        <authorList>
            <person name="Lowe M.E."/>
        </authorList>
    </citation>
    <scope>GPI-ANCHOR</scope>
</reference>
<reference key="13">
    <citation type="journal article" date="2002" name="J. Biol. Chem.">
        <title>Function assignment to conserved residues in mammalian alkaline phosphatases.</title>
        <authorList>
            <person name="Kozlenkov A."/>
            <person name="Manes T."/>
            <person name="Hoylaerts M.F."/>
            <person name="Millan J.L."/>
        </authorList>
    </citation>
    <scope>DISULFIDE BONDS</scope>
</reference>
<reference key="14">
    <citation type="journal article" date="2008" name="Proc. Natl. Acad. Sci. U.S.A.">
        <title>A quantitative atlas of mitotic phosphorylation.</title>
        <authorList>
            <person name="Dephoure N."/>
            <person name="Zhou C."/>
            <person name="Villen J."/>
            <person name="Beausoleil S.A."/>
            <person name="Bakalarski C.E."/>
            <person name="Elledge S.J."/>
            <person name="Gygi S.P."/>
        </authorList>
    </citation>
    <scope>IDENTIFICATION BY MASS SPECTROMETRY [LARGE SCALE ANALYSIS]</scope>
    <source>
        <tissue>Cervix carcinoma</tissue>
    </source>
</reference>
<reference key="15">
    <citation type="journal article" date="2015" name="PLoS ONE">
        <title>Functional significance of calcium binding to tissue-nonspecific alkaline phosphatase.</title>
        <authorList>
            <person name="Hoylaerts M.F."/>
            <person name="Van Kerckhoven S."/>
            <person name="Kiffer-Moreira T."/>
            <person name="Sheen C."/>
            <person name="Narisawa S."/>
            <person name="Millan J.L."/>
        </authorList>
    </citation>
    <scope>FUNCTION</scope>
    <scope>CATALYTIC ACTIVITY</scope>
    <scope>COFACTOR</scope>
</reference>
<reference key="16">
    <citation type="journal article" date="2001" name="J. Biol. Chem.">
        <title>Crystal structure of alkaline phosphatase from human placenta at 1.8 A resolution. Implication for a substrate specificity.</title>
        <authorList>
            <person name="Le Du M.H."/>
            <person name="Stigbrand T."/>
            <person name="Taussig M.J."/>
            <person name="Menez A."/>
            <person name="Stura E.A."/>
        </authorList>
    </citation>
    <scope>X-RAY CRYSTALLOGRAPHY (1.82 ANGSTROMS) OF 23-535 IN COMPLEX WITH MAGNESIUM AND ZINC</scope>
    <scope>COFACTOR</scope>
    <scope>DISULFIDE BOND</scope>
    <scope>SUBUNIT</scope>
</reference>
<reference key="17">
    <citation type="journal article" date="2005" name="J. Mol. Biol.">
        <title>Structural studies of human placental alkaline phosphatase in complex with functional ligands.</title>
        <authorList>
            <person name="Llinas P."/>
            <person name="Stura E.A."/>
            <person name="Menez A."/>
            <person name="Kiss Z."/>
            <person name="Stigbrand T."/>
            <person name="Millan J.L."/>
            <person name="Le Du M.H."/>
        </authorList>
    </citation>
    <scope>X-RAY CRYSTALLOGRAPHY (1.57 ANGSTROMS) OF 23-506 IN COMPLEX WITH MAGNESIUM AND ZINC</scope>
    <scope>GLYCOSYLATION AT ASN-144 AND ASN-271</scope>
    <scope>COFACTOR</scope>
    <scope>DISULFIDE BOND</scope>
    <scope>SUBUNIT</scope>
</reference>
<reference key="18">
    <citation type="journal article" date="2006" name="Protein Sci.">
        <title>Structural studies of human alkaline phosphatase in complex with strontium: implication for its secondary effect in bones.</title>
        <authorList>
            <person name="Llinas P."/>
            <person name="Masella M."/>
            <person name="Stigbrand T."/>
            <person name="Menez A."/>
            <person name="Stura E.A."/>
            <person name="Le Du M.H."/>
        </authorList>
    </citation>
    <scope>X-RAY CRYSTALLOGRAPHY (1.60 ANGSTROMS) OF 23-506 IN COMPLEX WITH MAGNESIUM AND ZINC</scope>
    <scope>GLYCOSYLATION AT ASN-144 AND ASN-271</scope>
    <scope>COFACTOR</scope>
    <scope>DISULFIDE BOND</scope>
    <scope>SUBUNIT</scope>
</reference>
<reference key="19">
    <citation type="journal article" date="2010" name="Acta Crystallogr. F">
        <title>Refined structures of placental alkaline phosphatase show a consistent pattern of interactions at the peripheral site.</title>
        <authorList>
            <person name="Stec B."/>
            <person name="Cheltsov A."/>
            <person name="Millan J.L."/>
        </authorList>
    </citation>
    <scope>X-RAY CRYSTALLOGRAPHY (1.57 ANGSTROMS) OF 23-506 IN COMPLEX WITH MAGNESIUM AND ZINC</scope>
    <scope>GLYCOSYLATION AT ASN-144 AND ASN-271</scope>
    <scope>COFACTOR</scope>
    <scope>DISULFIDE BOND</scope>
    <scope>SUBUNIT</scope>
    <scope>TISSUE SPECIFICITY</scope>
</reference>
<name>PPB1_HUMAN</name>
<keyword id="KW-0002">3D-structure</keyword>
<keyword id="KW-0106">Calcium</keyword>
<keyword id="KW-1003">Cell membrane</keyword>
<keyword id="KW-0903">Direct protein sequencing</keyword>
<keyword id="KW-1015">Disulfide bond</keyword>
<keyword id="KW-0325">Glycoprotein</keyword>
<keyword id="KW-0336">GPI-anchor</keyword>
<keyword id="KW-0378">Hydrolase</keyword>
<keyword id="KW-0449">Lipoprotein</keyword>
<keyword id="KW-0460">Magnesium</keyword>
<keyword id="KW-0472">Membrane</keyword>
<keyword id="KW-0479">Metal-binding</keyword>
<keyword id="KW-1267">Proteomics identification</keyword>
<keyword id="KW-1185">Reference proteome</keyword>
<keyword id="KW-0732">Signal</keyword>
<keyword id="KW-0812">Transmembrane</keyword>
<keyword id="KW-1133">Transmembrane helix</keyword>
<keyword id="KW-0862">Zinc</keyword>
<comment type="function">
    <text evidence="10 13">Alkaline phosphatase that can hydrolyze various phosphate compounds.</text>
</comment>
<comment type="catalytic activity">
    <reaction evidence="2 10 13">
        <text>a phosphate monoester + H2O = an alcohol + phosphate</text>
        <dbReference type="Rhea" id="RHEA:15017"/>
        <dbReference type="ChEBI" id="CHEBI:15377"/>
        <dbReference type="ChEBI" id="CHEBI:30879"/>
        <dbReference type="ChEBI" id="CHEBI:43474"/>
        <dbReference type="ChEBI" id="CHEBI:67140"/>
        <dbReference type="EC" id="3.1.3.1"/>
    </reaction>
    <physiologicalReaction direction="left-to-right" evidence="10 13">
        <dbReference type="Rhea" id="RHEA:15018"/>
    </physiologicalReaction>
</comment>
<comment type="cofactor">
    <cofactor evidence="4 7 8 11">
        <name>Mg(2+)</name>
        <dbReference type="ChEBI" id="CHEBI:18420"/>
    </cofactor>
    <text evidence="4 7 8 11">Binds 1 Mg(2+) ion.</text>
</comment>
<comment type="cofactor">
    <cofactor evidence="4 7 8 11">
        <name>Zn(2+)</name>
        <dbReference type="ChEBI" id="CHEBI:29105"/>
    </cofactor>
    <text evidence="4 7 8 11">Binds 2 Zn(2+) ions.</text>
</comment>
<comment type="cofactor">
    <cofactor evidence="20">
        <name>Ca(2+)</name>
        <dbReference type="ChEBI" id="CHEBI:29108"/>
    </cofactor>
</comment>
<comment type="subunit">
    <text evidence="4 7 8 11">Homodimer.</text>
</comment>
<comment type="interaction">
    <interactant intactId="EBI-1211484">
        <id>P05187</id>
    </interactant>
    <interactant intactId="EBI-10173507">
        <id>Q6UY14-3</id>
        <label>ADAMTSL4</label>
    </interactant>
    <organismsDiffer>false</organismsDiffer>
    <experiments>3</experiments>
</comment>
<comment type="interaction">
    <interactant intactId="EBI-1211484">
        <id>P05187</id>
    </interactant>
    <interactant intactId="EBI-713677">
        <id>Q9UGL9</id>
        <label>CRCT1</label>
    </interactant>
    <organismsDiffer>false</organismsDiffer>
    <experiments>3</experiments>
</comment>
<comment type="interaction">
    <interactant intactId="EBI-1211484">
        <id>P05187</id>
    </interactant>
    <interactant intactId="EBI-10192698">
        <id>Q02930-3</id>
        <label>CREB5</label>
    </interactant>
    <organismsDiffer>false</organismsDiffer>
    <experiments>3</experiments>
</comment>
<comment type="interaction">
    <interactant intactId="EBI-1211484">
        <id>P05187</id>
    </interactant>
    <interactant intactId="EBI-12175919">
        <id>P42830</id>
        <label>CXCL5</label>
    </interactant>
    <organismsDiffer>false</organismsDiffer>
    <experiments>3</experiments>
</comment>
<comment type="interaction">
    <interactant intactId="EBI-1211484">
        <id>P05187</id>
    </interactant>
    <interactant intactId="EBI-3867333">
        <id>A8MQ03</id>
        <label>CYSRT1</label>
    </interactant>
    <organismsDiffer>false</organismsDiffer>
    <experiments>3</experiments>
</comment>
<comment type="interaction">
    <interactant intactId="EBI-1211484">
        <id>P05187</id>
    </interactant>
    <interactant intactId="EBI-719816">
        <id>Q9NWN3</id>
        <label>FBXO34</label>
    </interactant>
    <organismsDiffer>false</organismsDiffer>
    <experiments>3</experiments>
</comment>
<comment type="interaction">
    <interactant intactId="EBI-1211484">
        <id>P05187</id>
    </interactant>
    <interactant intactId="EBI-356700">
        <id>P57678</id>
        <label>GEMIN4</label>
    </interactant>
    <organismsDiffer>false</organismsDiffer>
    <experiments>3</experiments>
</comment>
<comment type="interaction">
    <interactant intactId="EBI-1211484">
        <id>P05187</id>
    </interactant>
    <interactant intactId="EBI-19954058">
        <id>O15499</id>
        <label>GSC2</label>
    </interactant>
    <organismsDiffer>false</organismsDiffer>
    <experiments>3</experiments>
</comment>
<comment type="interaction">
    <interactant intactId="EBI-1211484">
        <id>P05187</id>
    </interactant>
    <interactant intactId="EBI-740785">
        <id>P49639</id>
        <label>HOXA1</label>
    </interactant>
    <organismsDiffer>false</organismsDiffer>
    <experiments>7</experiments>
</comment>
<comment type="interaction">
    <interactant intactId="EBI-1211484">
        <id>P05187</id>
    </interactant>
    <interactant intactId="EBI-947015">
        <id>P24592</id>
        <label>IGFBP6</label>
    </interactant>
    <organismsDiffer>false</organismsDiffer>
    <experiments>3</experiments>
</comment>
<comment type="interaction">
    <interactant intactId="EBI-1211484">
        <id>P05187</id>
    </interactant>
    <interactant intactId="EBI-11959885">
        <id>Q07627</id>
        <label>KRTAP1-1</label>
    </interactant>
    <organismsDiffer>false</organismsDiffer>
    <experiments>3</experiments>
</comment>
<comment type="interaction">
    <interactant intactId="EBI-1211484">
        <id>P05187</id>
    </interactant>
    <interactant intactId="EBI-11749135">
        <id>Q8IUG1</id>
        <label>KRTAP1-3</label>
    </interactant>
    <organismsDiffer>false</organismsDiffer>
    <experiments>3</experiments>
</comment>
<comment type="interaction">
    <interactant intactId="EBI-1211484">
        <id>P05187</id>
    </interactant>
    <interactant intactId="EBI-10171774">
        <id>P60410</id>
        <label>KRTAP10-8</label>
    </interactant>
    <organismsDiffer>false</organismsDiffer>
    <experiments>3</experiments>
</comment>
<comment type="interaction">
    <interactant intactId="EBI-1211484">
        <id>P05187</id>
    </interactant>
    <interactant intactId="EBI-739863">
        <id>Q9BQ66</id>
        <label>KRTAP4-12</label>
    </interactant>
    <organismsDiffer>false</organismsDiffer>
    <experiments>3</experiments>
</comment>
<comment type="interaction">
    <interactant intactId="EBI-1211484">
        <id>P05187</id>
    </interactant>
    <interactant intactId="EBI-3958099">
        <id>P26371</id>
        <label>KRTAP5-9</label>
    </interactant>
    <organismsDiffer>false</organismsDiffer>
    <experiments>6</experiments>
</comment>
<comment type="interaction">
    <interactant intactId="EBI-1211484">
        <id>P05187</id>
    </interactant>
    <interactant intactId="EBI-11741311">
        <id>Q5T752</id>
        <label>LCE1D</label>
    </interactant>
    <organismsDiffer>false</organismsDiffer>
    <experiments>3</experiments>
</comment>
<comment type="interaction">
    <interactant intactId="EBI-1211484">
        <id>P05187</id>
    </interactant>
    <interactant intactId="EBI-11955335">
        <id>Q5T753</id>
        <label>LCE1E</label>
    </interactant>
    <organismsDiffer>false</organismsDiffer>
    <experiments>3</experiments>
</comment>
<comment type="interaction">
    <interactant intactId="EBI-1211484">
        <id>P05187</id>
    </interactant>
    <interactant intactId="EBI-11958008">
        <id>Q5T754</id>
        <label>LCE1F</label>
    </interactant>
    <organismsDiffer>false</organismsDiffer>
    <experiments>3</experiments>
</comment>
<comment type="interaction">
    <interactant intactId="EBI-1211484">
        <id>P05187</id>
    </interactant>
    <interactant intactId="EBI-11973993">
        <id>Q5TA81</id>
        <label>LCE2C</label>
    </interactant>
    <organismsDiffer>false</organismsDiffer>
    <experiments>3</experiments>
</comment>
<comment type="interaction">
    <interactant intactId="EBI-1211484">
        <id>P05187</id>
    </interactant>
    <interactant intactId="EBI-9394625">
        <id>Q5TA76</id>
        <label>LCE3A</label>
    </interactant>
    <organismsDiffer>false</organismsDiffer>
    <experiments>5</experiments>
</comment>
<comment type="interaction">
    <interactant intactId="EBI-1211484">
        <id>P05187</id>
    </interactant>
    <interactant intactId="EBI-11974495">
        <id>Q5TA77</id>
        <label>LCE3B</label>
    </interactant>
    <organismsDiffer>false</organismsDiffer>
    <experiments>3</experiments>
</comment>
<comment type="interaction">
    <interactant intactId="EBI-1211484">
        <id>P05187</id>
    </interactant>
    <interactant intactId="EBI-10245291">
        <id>Q5T5A8</id>
        <label>LCE3C</label>
    </interactant>
    <organismsDiffer>false</organismsDiffer>
    <experiments>3</experiments>
</comment>
<comment type="interaction">
    <interactant intactId="EBI-1211484">
        <id>P05187</id>
    </interactant>
    <interactant intactId="EBI-6658837">
        <id>Q9BYE3</id>
        <label>LCE3D</label>
    </interactant>
    <organismsDiffer>false</organismsDiffer>
    <experiments>5</experiments>
</comment>
<comment type="interaction">
    <interactant intactId="EBI-1211484">
        <id>P05187</id>
    </interactant>
    <interactant intactId="EBI-10245456">
        <id>Q5T5B0</id>
        <label>LCE3E</label>
    </interactant>
    <organismsDiffer>false</organismsDiffer>
    <experiments>3</experiments>
</comment>
<comment type="interaction">
    <interactant intactId="EBI-1211484">
        <id>P05187</id>
    </interactant>
    <interactant intactId="EBI-11955689">
        <id>Q5TCM9</id>
        <label>LCE5A</label>
    </interactant>
    <organismsDiffer>false</organismsDiffer>
    <experiments>3</experiments>
</comment>
<comment type="interaction">
    <interactant intactId="EBI-1211484">
        <id>P05187</id>
    </interactant>
    <interactant intactId="EBI-18115868">
        <id>Q5T871</id>
        <label>LELP1</label>
    </interactant>
    <organismsDiffer>false</organismsDiffer>
    <experiments>3</experiments>
</comment>
<comment type="interaction">
    <interactant intactId="EBI-1211484">
        <id>P05187</id>
    </interactant>
    <interactant intactId="EBI-16439278">
        <id>Q6FHY5</id>
        <label>MEOX2</label>
    </interactant>
    <organismsDiffer>false</organismsDiffer>
    <experiments>3</experiments>
</comment>
<comment type="interaction">
    <interactant intactId="EBI-1211484">
        <id>P05187</id>
    </interactant>
    <interactant intactId="EBI-22310682">
        <id>P0DPK4</id>
        <label>NOTCH2NLC</label>
    </interactant>
    <organismsDiffer>false</organismsDiffer>
    <experiments>3</experiments>
</comment>
<comment type="interaction">
    <interactant intactId="EBI-1211484">
        <id>P05187</id>
    </interactant>
    <interactant intactId="EBI-13644623">
        <id>Q92570</id>
        <label>NR4A3</label>
    </interactant>
    <organismsDiffer>false</organismsDiffer>
    <experiments>3</experiments>
</comment>
<comment type="interaction">
    <interactant intactId="EBI-1211484">
        <id>P05187</id>
    </interactant>
    <interactant intactId="EBI-740446">
        <id>P32242</id>
        <label>OTX1</label>
    </interactant>
    <organismsDiffer>false</organismsDiffer>
    <experiments>3</experiments>
</comment>
<comment type="interaction">
    <interactant intactId="EBI-1211484">
        <id>P05187</id>
    </interactant>
    <interactant intactId="EBI-17236143">
        <id>Q12837</id>
        <label>POU4F2</label>
    </interactant>
    <organismsDiffer>false</organismsDiffer>
    <experiments>3</experiments>
</comment>
<comment type="interaction">
    <interactant intactId="EBI-1211484">
        <id>P05187</id>
    </interactant>
    <interactant intactId="EBI-874907">
        <id>P49795</id>
        <label>RGS19</label>
    </interactant>
    <organismsDiffer>false</organismsDiffer>
    <experiments>3</experiments>
</comment>
<comment type="interaction">
    <interactant intactId="EBI-1211484">
        <id>P05187</id>
    </interactant>
    <interactant intactId="EBI-10178530">
        <id>O76081-6</id>
        <label>RGS20</label>
    </interactant>
    <organismsDiffer>false</organismsDiffer>
    <experiments>3</experiments>
</comment>
<comment type="interaction">
    <interactant intactId="EBI-1211484">
        <id>P05187</id>
    </interactant>
    <interactant intactId="EBI-750494">
        <id>P49901</id>
        <label>SMCP</label>
    </interactant>
    <organismsDiffer>false</organismsDiffer>
    <experiments>3</experiments>
</comment>
<comment type="interaction">
    <interactant intactId="EBI-1211484">
        <id>P05187</id>
    </interactant>
    <interactant intactId="EBI-2562368">
        <id>P22735</id>
        <label>TGM1</label>
    </interactant>
    <organismsDiffer>false</organismsDiffer>
    <experiments>3</experiments>
</comment>
<comment type="subcellular location">
    <subcellularLocation>
        <location>Cell membrane</location>
        <topology evidence="9 12">Lipid-anchor</topology>
        <topology evidence="9 12">GPI-anchor</topology>
    </subcellularLocation>
</comment>
<comment type="tissue specificity">
    <text evidence="11">Detected in placenta (at protein level).</text>
</comment>
<comment type="polymorphism">
    <text evidence="15">Placental ALP is highly polymorphic, there are at least three common alleles.</text>
</comment>
<comment type="miscellaneous">
    <text>In most mammals there are four different isozymes: placental (ALPP), germ cell (ALPG), intestinal (ALPI) and tissue non-specific (liver/bone/kidney) (ALPL/TNAP).</text>
</comment>
<comment type="similarity">
    <text evidence="19">Belongs to the alkaline phosphatase family.</text>
</comment>
<comment type="sequence caution" evidence="19">
    <conflict type="erroneous initiation">
        <sequence resource="EMBL-CDS" id="AAA51708"/>
    </conflict>
    <text>Extended N-terminus.</text>
</comment>
<comment type="online information" name="Wikipedia">
    <link uri="https://en.wikipedia.org/wiki/Alkaline_phosphatase"/>
    <text>Alkaline phosphatase entry</text>
</comment>
<dbReference type="EC" id="3.1.3.1"/>
<dbReference type="EMBL" id="M19159">
    <property type="protein sequence ID" value="AAA51710.1"/>
    <property type="molecule type" value="Genomic_DNA"/>
</dbReference>
<dbReference type="EMBL" id="M13077">
    <property type="protein sequence ID" value="AAC97139.1"/>
    <property type="molecule type" value="mRNA"/>
</dbReference>
<dbReference type="EMBL" id="M14169">
    <property type="protein sequence ID" value="AAA51708.1"/>
    <property type="status" value="ALT_INIT"/>
    <property type="molecule type" value="mRNA"/>
</dbReference>
<dbReference type="EMBL" id="M14170">
    <property type="protein sequence ID" value="AAA51709.1"/>
    <property type="molecule type" value="mRNA"/>
</dbReference>
<dbReference type="EMBL" id="AC068134">
    <property type="protein sequence ID" value="AAY24087.1"/>
    <property type="molecule type" value="Genomic_DNA"/>
</dbReference>
<dbReference type="EMBL" id="BC009647">
    <property type="protein sequence ID" value="AAH09647.1"/>
    <property type="molecule type" value="mRNA"/>
</dbReference>
<dbReference type="EMBL" id="BC068501">
    <property type="protein sequence ID" value="AAH68501.1"/>
    <property type="molecule type" value="mRNA"/>
</dbReference>
<dbReference type="EMBL" id="BC094743">
    <property type="protein sequence ID" value="AAH94743.1"/>
    <property type="molecule type" value="mRNA"/>
</dbReference>
<dbReference type="EMBL" id="M12551">
    <property type="protein sequence ID" value="AAA51706.1"/>
    <property type="molecule type" value="mRNA"/>
</dbReference>
<dbReference type="CCDS" id="CCDS2490.1"/>
<dbReference type="PIR" id="A31074">
    <property type="entry name" value="PAHUA"/>
</dbReference>
<dbReference type="RefSeq" id="NP_001623.3">
    <property type="nucleotide sequence ID" value="NM_001632.4"/>
</dbReference>
<dbReference type="PDB" id="1EW2">
    <property type="method" value="X-ray"/>
    <property type="resolution" value="1.82 A"/>
    <property type="chains" value="A=23-535"/>
</dbReference>
<dbReference type="PDB" id="1ZEB">
    <property type="method" value="X-ray"/>
    <property type="resolution" value="1.90 A"/>
    <property type="chains" value="A=23-506"/>
</dbReference>
<dbReference type="PDB" id="1ZED">
    <property type="method" value="X-ray"/>
    <property type="resolution" value="1.57 A"/>
    <property type="chains" value="A=23-506"/>
</dbReference>
<dbReference type="PDB" id="1ZEF">
    <property type="method" value="X-ray"/>
    <property type="resolution" value="1.90 A"/>
    <property type="chains" value="A=23-506"/>
</dbReference>
<dbReference type="PDB" id="2GLQ">
    <property type="method" value="X-ray"/>
    <property type="resolution" value="1.60 A"/>
    <property type="chains" value="A=23-506"/>
</dbReference>
<dbReference type="PDB" id="3MK0">
    <property type="method" value="X-ray"/>
    <property type="resolution" value="1.90 A"/>
    <property type="chains" value="A=23-506"/>
</dbReference>
<dbReference type="PDB" id="3MK1">
    <property type="method" value="X-ray"/>
    <property type="resolution" value="1.57 A"/>
    <property type="chains" value="A=23-506"/>
</dbReference>
<dbReference type="PDB" id="3MK2">
    <property type="method" value="X-ray"/>
    <property type="resolution" value="1.89 A"/>
    <property type="chains" value="A=23-503"/>
</dbReference>
<dbReference type="PDBsum" id="1EW2"/>
<dbReference type="PDBsum" id="1ZEB"/>
<dbReference type="PDBsum" id="1ZED"/>
<dbReference type="PDBsum" id="1ZEF"/>
<dbReference type="PDBsum" id="2GLQ"/>
<dbReference type="PDBsum" id="3MK0"/>
<dbReference type="PDBsum" id="3MK1"/>
<dbReference type="PDBsum" id="3MK2"/>
<dbReference type="SMR" id="P05187"/>
<dbReference type="BioGRID" id="106751">
    <property type="interactions" value="143"/>
</dbReference>
<dbReference type="FunCoup" id="P05187">
    <property type="interactions" value="367"/>
</dbReference>
<dbReference type="IntAct" id="P05187">
    <property type="interactions" value="94"/>
</dbReference>
<dbReference type="MINT" id="P05187"/>
<dbReference type="STRING" id="9606.ENSP00000375881"/>
<dbReference type="BindingDB" id="P05187"/>
<dbReference type="ChEMBL" id="CHEMBL4458"/>
<dbReference type="DrugBank" id="DB01373">
    <property type="generic name" value="Calcium"/>
</dbReference>
<dbReference type="DrugBank" id="DB08413">
    <property type="generic name" value="METHYL-PHOSPHONIC ACID MONO-(4-NITRO-PHENYL) ESTER"/>
</dbReference>
<dbReference type="DEPOD" id="ALPP"/>
<dbReference type="GlyCosmos" id="P05187">
    <property type="glycosylation" value="2 sites, No reported glycans"/>
</dbReference>
<dbReference type="GlyGen" id="P05187">
    <property type="glycosylation" value="3 sites, 1 N-linked glycan (1 site)"/>
</dbReference>
<dbReference type="iPTMnet" id="P05187"/>
<dbReference type="MetOSite" id="P05187"/>
<dbReference type="PhosphoSitePlus" id="P05187"/>
<dbReference type="BioMuta" id="ALPP"/>
<dbReference type="DMDM" id="130737"/>
<dbReference type="jPOST" id="P05187"/>
<dbReference type="MassIVE" id="P05187"/>
<dbReference type="PaxDb" id="9606-ENSP00000375881"/>
<dbReference type="PeptideAtlas" id="P05187"/>
<dbReference type="ProteomicsDB" id="51823"/>
<dbReference type="Pumba" id="P05187"/>
<dbReference type="ABCD" id="P05187">
    <property type="antibodies" value="15 sequenced antibodies"/>
</dbReference>
<dbReference type="Antibodypedia" id="3515">
    <property type="antibodies" value="1845 antibodies from 47 providers"/>
</dbReference>
<dbReference type="DNASU" id="250"/>
<dbReference type="Ensembl" id="ENST00000392027.3">
    <property type="protein sequence ID" value="ENSP00000375881.2"/>
    <property type="gene ID" value="ENSG00000163283.7"/>
</dbReference>
<dbReference type="GeneID" id="250"/>
<dbReference type="KEGG" id="hsa:250"/>
<dbReference type="MANE-Select" id="ENST00000392027.3">
    <property type="protein sequence ID" value="ENSP00000375881.2"/>
    <property type="RefSeq nucleotide sequence ID" value="NM_001632.5"/>
    <property type="RefSeq protein sequence ID" value="NP_001623.3"/>
</dbReference>
<dbReference type="UCSC" id="uc002vsq.4">
    <property type="organism name" value="human"/>
</dbReference>
<dbReference type="AGR" id="HGNC:439"/>
<dbReference type="CTD" id="250"/>
<dbReference type="DisGeNET" id="250"/>
<dbReference type="GeneCards" id="ALPP"/>
<dbReference type="HGNC" id="HGNC:439">
    <property type="gene designation" value="ALPP"/>
</dbReference>
<dbReference type="HPA" id="ENSG00000163283">
    <property type="expression patterns" value="Group enriched (cervix, placenta)"/>
</dbReference>
<dbReference type="MIM" id="171800">
    <property type="type" value="gene"/>
</dbReference>
<dbReference type="neXtProt" id="NX_P05187"/>
<dbReference type="OpenTargets" id="ENSG00000163283"/>
<dbReference type="PharmGKB" id="PA24730"/>
<dbReference type="VEuPathDB" id="HostDB:ENSG00000163283"/>
<dbReference type="eggNOG" id="KOG4126">
    <property type="taxonomic scope" value="Eukaryota"/>
</dbReference>
<dbReference type="GeneTree" id="ENSGT00950000183063"/>
<dbReference type="HOGENOM" id="CLU_008539_4_0_1"/>
<dbReference type="InParanoid" id="P05187"/>
<dbReference type="OMA" id="NMPCSAR"/>
<dbReference type="OrthoDB" id="9523775at2759"/>
<dbReference type="PAN-GO" id="P05187">
    <property type="GO annotations" value="3 GO annotations based on evolutionary models"/>
</dbReference>
<dbReference type="PhylomeDB" id="P05187"/>
<dbReference type="TreeFam" id="TF323513"/>
<dbReference type="BRENDA" id="3.1.3.1">
    <property type="organism ID" value="2681"/>
</dbReference>
<dbReference type="PathwayCommons" id="P05187"/>
<dbReference type="Reactome" id="R-HSA-6811438">
    <property type="pathway name" value="Intra-Golgi traffic"/>
</dbReference>
<dbReference type="SABIO-RK" id="P05187"/>
<dbReference type="SignaLink" id="P05187"/>
<dbReference type="BioGRID-ORCS" id="250">
    <property type="hits" value="13 hits in 1095 CRISPR screens"/>
</dbReference>
<dbReference type="ChiTaRS" id="ALPP">
    <property type="organism name" value="human"/>
</dbReference>
<dbReference type="EvolutionaryTrace" id="P05187"/>
<dbReference type="GeneWiki" id="Placental_alkaline_phosphatase"/>
<dbReference type="GenomeRNAi" id="250"/>
<dbReference type="Pharos" id="P05187">
    <property type="development level" value="Tbio"/>
</dbReference>
<dbReference type="PRO" id="PR:P05187"/>
<dbReference type="Proteomes" id="UP000005640">
    <property type="component" value="Chromosome 2"/>
</dbReference>
<dbReference type="RNAct" id="P05187">
    <property type="molecule type" value="protein"/>
</dbReference>
<dbReference type="Bgee" id="ENSG00000163283">
    <property type="expression patterns" value="Expressed in placenta and 52 other cell types or tissues"/>
</dbReference>
<dbReference type="GO" id="GO:0009986">
    <property type="term" value="C:cell surface"/>
    <property type="evidence" value="ECO:0000314"/>
    <property type="project" value="UniProtKB"/>
</dbReference>
<dbReference type="GO" id="GO:0005886">
    <property type="term" value="C:plasma membrane"/>
    <property type="evidence" value="ECO:0000314"/>
    <property type="project" value="HPA"/>
</dbReference>
<dbReference type="GO" id="GO:0098552">
    <property type="term" value="C:side of membrane"/>
    <property type="evidence" value="ECO:0007669"/>
    <property type="project" value="UniProtKB-KW"/>
</dbReference>
<dbReference type="GO" id="GO:0004035">
    <property type="term" value="F:alkaline phosphatase activity"/>
    <property type="evidence" value="ECO:0000314"/>
    <property type="project" value="UniProtKB"/>
</dbReference>
<dbReference type="GO" id="GO:0000287">
    <property type="term" value="F:magnesium ion binding"/>
    <property type="evidence" value="ECO:0000250"/>
    <property type="project" value="UniProtKB"/>
</dbReference>
<dbReference type="GO" id="GO:0008270">
    <property type="term" value="F:zinc ion binding"/>
    <property type="evidence" value="ECO:0000250"/>
    <property type="project" value="UniProtKB"/>
</dbReference>
<dbReference type="CDD" id="cd16012">
    <property type="entry name" value="ALP"/>
    <property type="match status" value="1"/>
</dbReference>
<dbReference type="FunFam" id="3.40.720.10:FF:000008">
    <property type="entry name" value="Alkaline phosphatase"/>
    <property type="match status" value="1"/>
</dbReference>
<dbReference type="Gene3D" id="3.40.720.10">
    <property type="entry name" value="Alkaline Phosphatase, subunit A"/>
    <property type="match status" value="1"/>
</dbReference>
<dbReference type="InterPro" id="IPR001952">
    <property type="entry name" value="Alkaline_phosphatase"/>
</dbReference>
<dbReference type="InterPro" id="IPR018299">
    <property type="entry name" value="Alkaline_phosphatase_AS"/>
</dbReference>
<dbReference type="InterPro" id="IPR017850">
    <property type="entry name" value="Alkaline_phosphatase_core_sf"/>
</dbReference>
<dbReference type="PANTHER" id="PTHR11596">
    <property type="entry name" value="ALKALINE PHOSPHATASE"/>
    <property type="match status" value="1"/>
</dbReference>
<dbReference type="PANTHER" id="PTHR11596:SF69">
    <property type="entry name" value="ALKALINE PHOSPHATASE, PLACENTAL TYPE"/>
    <property type="match status" value="1"/>
</dbReference>
<dbReference type="Pfam" id="PF00245">
    <property type="entry name" value="Alk_phosphatase"/>
    <property type="match status" value="1"/>
</dbReference>
<dbReference type="PRINTS" id="PR00113">
    <property type="entry name" value="ALKPHPHTASE"/>
</dbReference>
<dbReference type="SMART" id="SM00098">
    <property type="entry name" value="alkPPc"/>
    <property type="match status" value="1"/>
</dbReference>
<dbReference type="SUPFAM" id="SSF53649">
    <property type="entry name" value="Alkaline phosphatase-like"/>
    <property type="match status" value="1"/>
</dbReference>
<dbReference type="PROSITE" id="PS00123">
    <property type="entry name" value="ALKALINE_PHOSPHATASE"/>
    <property type="match status" value="1"/>
</dbReference>
<gene>
    <name evidence="21" type="primary">ALPP</name>
    <name evidence="18" type="synonym">PLAP</name>
</gene>